<reference key="1">
    <citation type="journal article" date="2005" name="Proc. Natl. Acad. Sci. U.S.A.">
        <title>Complete genome sequence of Vibrio fischeri: a symbiotic bacterium with pathogenic congeners.</title>
        <authorList>
            <person name="Ruby E.G."/>
            <person name="Urbanowski M."/>
            <person name="Campbell J."/>
            <person name="Dunn A."/>
            <person name="Faini M."/>
            <person name="Gunsalus R."/>
            <person name="Lostroh P."/>
            <person name="Lupp C."/>
            <person name="McCann J."/>
            <person name="Millikan D."/>
            <person name="Schaefer A."/>
            <person name="Stabb E."/>
            <person name="Stevens A."/>
            <person name="Visick K."/>
            <person name="Whistler C."/>
            <person name="Greenberg E.P."/>
        </authorList>
    </citation>
    <scope>NUCLEOTIDE SEQUENCE [LARGE SCALE GENOMIC DNA]</scope>
    <source>
        <strain>ATCC 700601 / ES114</strain>
    </source>
</reference>
<evidence type="ECO:0000255" key="1">
    <source>
        <dbReference type="HAMAP-Rule" id="MF_00318"/>
    </source>
</evidence>
<protein>
    <recommendedName>
        <fullName evidence="1">Enolase</fullName>
        <ecNumber evidence="1">4.2.1.11</ecNumber>
    </recommendedName>
    <alternativeName>
        <fullName evidence="1">2-phospho-D-glycerate hydro-lyase</fullName>
    </alternativeName>
    <alternativeName>
        <fullName evidence="1">2-phosphoglycerate dehydratase</fullName>
    </alternativeName>
</protein>
<keyword id="KW-0963">Cytoplasm</keyword>
<keyword id="KW-0324">Glycolysis</keyword>
<keyword id="KW-0456">Lyase</keyword>
<keyword id="KW-0460">Magnesium</keyword>
<keyword id="KW-0479">Metal-binding</keyword>
<keyword id="KW-1185">Reference proteome</keyword>
<keyword id="KW-0964">Secreted</keyword>
<proteinExistence type="inferred from homology"/>
<sequence length="432" mass="45531">MSKIVKVLGREIIDSRGNPTVEAEVHLESGFVGMAAAPSGASTGSREALELRDGDKARFLGKGVLKAVAAVNGPIAEALVGKDAKNQAEIDQIMIDLDGTDNKANFGANAILAVSLANAKAAAAAKSMPLYAHIAELNGTPGVFSMPLPMMNIINGGEHADNNVDIQEFMIQPVGAKTLKEGLRIGAEVFHNLAKVLKSKGYSTAVGDEGGFAPNLKSNAEALEVIAEAVAAAGYELGKDVTLAMDCAASEFFDKEAGIYNMKGEGKTFTSEEFNHYLAELANQFPIVSIEDGLDESDWTGFKHQTELLGDKLQLVGDDLFVTNTKILAEGIEKGVANSILIKFNQIGSLTETLAAIKMAKDAGYTAVISHRSGETEDATIADLAVGTAAGQIKTGSMSRSDRVAKYNQLIRIEEALGEKAPFNGLKEVKGQ</sequence>
<name>ENO_ALIF1</name>
<organism>
    <name type="scientific">Aliivibrio fischeri (strain ATCC 700601 / ES114)</name>
    <name type="common">Vibrio fischeri</name>
    <dbReference type="NCBI Taxonomy" id="312309"/>
    <lineage>
        <taxon>Bacteria</taxon>
        <taxon>Pseudomonadati</taxon>
        <taxon>Pseudomonadota</taxon>
        <taxon>Gammaproteobacteria</taxon>
        <taxon>Vibrionales</taxon>
        <taxon>Vibrionaceae</taxon>
        <taxon>Aliivibrio</taxon>
    </lineage>
</organism>
<comment type="function">
    <text evidence="1">Catalyzes the reversible conversion of 2-phosphoglycerate (2-PG) into phosphoenolpyruvate (PEP). It is essential for the degradation of carbohydrates via glycolysis.</text>
</comment>
<comment type="catalytic activity">
    <reaction evidence="1">
        <text>(2R)-2-phosphoglycerate = phosphoenolpyruvate + H2O</text>
        <dbReference type="Rhea" id="RHEA:10164"/>
        <dbReference type="ChEBI" id="CHEBI:15377"/>
        <dbReference type="ChEBI" id="CHEBI:58289"/>
        <dbReference type="ChEBI" id="CHEBI:58702"/>
        <dbReference type="EC" id="4.2.1.11"/>
    </reaction>
</comment>
<comment type="cofactor">
    <cofactor evidence="1">
        <name>Mg(2+)</name>
        <dbReference type="ChEBI" id="CHEBI:18420"/>
    </cofactor>
    <text evidence="1">Binds a second Mg(2+) ion via substrate during catalysis.</text>
</comment>
<comment type="pathway">
    <text evidence="1">Carbohydrate degradation; glycolysis; pyruvate from D-glyceraldehyde 3-phosphate: step 4/5.</text>
</comment>
<comment type="subunit">
    <text evidence="1">Component of the RNA degradosome, a multiprotein complex involved in RNA processing and mRNA degradation.</text>
</comment>
<comment type="subcellular location">
    <subcellularLocation>
        <location evidence="1">Cytoplasm</location>
    </subcellularLocation>
    <subcellularLocation>
        <location evidence="1">Secreted</location>
    </subcellularLocation>
    <subcellularLocation>
        <location evidence="1">Cell surface</location>
    </subcellularLocation>
    <text evidence="1">Fractions of enolase are present in both the cytoplasm and on the cell surface.</text>
</comment>
<comment type="similarity">
    <text evidence="1">Belongs to the enolase family.</text>
</comment>
<dbReference type="EC" id="4.2.1.11" evidence="1"/>
<dbReference type="EMBL" id="CP000020">
    <property type="protein sequence ID" value="AAW86570.1"/>
    <property type="molecule type" value="Genomic_DNA"/>
</dbReference>
<dbReference type="RefSeq" id="WP_011262541.1">
    <property type="nucleotide sequence ID" value="NC_006840.2"/>
</dbReference>
<dbReference type="RefSeq" id="YP_205458.1">
    <property type="nucleotide sequence ID" value="NC_006840.2"/>
</dbReference>
<dbReference type="SMR" id="Q5E326"/>
<dbReference type="STRING" id="312309.VF_2075"/>
<dbReference type="EnsemblBacteria" id="AAW86570">
    <property type="protein sequence ID" value="AAW86570"/>
    <property type="gene ID" value="VF_2075"/>
</dbReference>
<dbReference type="GeneID" id="54164781"/>
<dbReference type="KEGG" id="vfi:VF_2075"/>
<dbReference type="PATRIC" id="fig|312309.11.peg.2118"/>
<dbReference type="eggNOG" id="COG0148">
    <property type="taxonomic scope" value="Bacteria"/>
</dbReference>
<dbReference type="HOGENOM" id="CLU_031223_2_1_6"/>
<dbReference type="OrthoDB" id="9804716at2"/>
<dbReference type="UniPathway" id="UPA00109">
    <property type="reaction ID" value="UER00187"/>
</dbReference>
<dbReference type="Proteomes" id="UP000000537">
    <property type="component" value="Chromosome I"/>
</dbReference>
<dbReference type="GO" id="GO:0009986">
    <property type="term" value="C:cell surface"/>
    <property type="evidence" value="ECO:0007669"/>
    <property type="project" value="UniProtKB-SubCell"/>
</dbReference>
<dbReference type="GO" id="GO:0005576">
    <property type="term" value="C:extracellular region"/>
    <property type="evidence" value="ECO:0007669"/>
    <property type="project" value="UniProtKB-SubCell"/>
</dbReference>
<dbReference type="GO" id="GO:0000015">
    <property type="term" value="C:phosphopyruvate hydratase complex"/>
    <property type="evidence" value="ECO:0007669"/>
    <property type="project" value="InterPro"/>
</dbReference>
<dbReference type="GO" id="GO:0000287">
    <property type="term" value="F:magnesium ion binding"/>
    <property type="evidence" value="ECO:0007669"/>
    <property type="project" value="UniProtKB-UniRule"/>
</dbReference>
<dbReference type="GO" id="GO:0004634">
    <property type="term" value="F:phosphopyruvate hydratase activity"/>
    <property type="evidence" value="ECO:0007669"/>
    <property type="project" value="UniProtKB-UniRule"/>
</dbReference>
<dbReference type="GO" id="GO:0006096">
    <property type="term" value="P:glycolytic process"/>
    <property type="evidence" value="ECO:0007669"/>
    <property type="project" value="UniProtKB-UniRule"/>
</dbReference>
<dbReference type="CDD" id="cd03313">
    <property type="entry name" value="enolase"/>
    <property type="match status" value="1"/>
</dbReference>
<dbReference type="FunFam" id="3.20.20.120:FF:000001">
    <property type="entry name" value="Enolase"/>
    <property type="match status" value="1"/>
</dbReference>
<dbReference type="FunFam" id="3.30.390.10:FF:000001">
    <property type="entry name" value="Enolase"/>
    <property type="match status" value="1"/>
</dbReference>
<dbReference type="Gene3D" id="3.20.20.120">
    <property type="entry name" value="Enolase-like C-terminal domain"/>
    <property type="match status" value="1"/>
</dbReference>
<dbReference type="Gene3D" id="3.30.390.10">
    <property type="entry name" value="Enolase-like, N-terminal domain"/>
    <property type="match status" value="1"/>
</dbReference>
<dbReference type="HAMAP" id="MF_00318">
    <property type="entry name" value="Enolase"/>
    <property type="match status" value="1"/>
</dbReference>
<dbReference type="InterPro" id="IPR000941">
    <property type="entry name" value="Enolase"/>
</dbReference>
<dbReference type="InterPro" id="IPR036849">
    <property type="entry name" value="Enolase-like_C_sf"/>
</dbReference>
<dbReference type="InterPro" id="IPR029017">
    <property type="entry name" value="Enolase-like_N"/>
</dbReference>
<dbReference type="InterPro" id="IPR020810">
    <property type="entry name" value="Enolase_C"/>
</dbReference>
<dbReference type="InterPro" id="IPR020809">
    <property type="entry name" value="Enolase_CS"/>
</dbReference>
<dbReference type="InterPro" id="IPR020811">
    <property type="entry name" value="Enolase_N"/>
</dbReference>
<dbReference type="NCBIfam" id="TIGR01060">
    <property type="entry name" value="eno"/>
    <property type="match status" value="1"/>
</dbReference>
<dbReference type="PANTHER" id="PTHR11902">
    <property type="entry name" value="ENOLASE"/>
    <property type="match status" value="1"/>
</dbReference>
<dbReference type="PANTHER" id="PTHR11902:SF1">
    <property type="entry name" value="ENOLASE"/>
    <property type="match status" value="1"/>
</dbReference>
<dbReference type="Pfam" id="PF00113">
    <property type="entry name" value="Enolase_C"/>
    <property type="match status" value="1"/>
</dbReference>
<dbReference type="Pfam" id="PF03952">
    <property type="entry name" value="Enolase_N"/>
    <property type="match status" value="1"/>
</dbReference>
<dbReference type="PIRSF" id="PIRSF001400">
    <property type="entry name" value="Enolase"/>
    <property type="match status" value="1"/>
</dbReference>
<dbReference type="PRINTS" id="PR00148">
    <property type="entry name" value="ENOLASE"/>
</dbReference>
<dbReference type="SFLD" id="SFLDS00001">
    <property type="entry name" value="Enolase"/>
    <property type="match status" value="1"/>
</dbReference>
<dbReference type="SFLD" id="SFLDF00002">
    <property type="entry name" value="enolase"/>
    <property type="match status" value="1"/>
</dbReference>
<dbReference type="SMART" id="SM01192">
    <property type="entry name" value="Enolase_C"/>
    <property type="match status" value="1"/>
</dbReference>
<dbReference type="SMART" id="SM01193">
    <property type="entry name" value="Enolase_N"/>
    <property type="match status" value="1"/>
</dbReference>
<dbReference type="SUPFAM" id="SSF51604">
    <property type="entry name" value="Enolase C-terminal domain-like"/>
    <property type="match status" value="1"/>
</dbReference>
<dbReference type="SUPFAM" id="SSF54826">
    <property type="entry name" value="Enolase N-terminal domain-like"/>
    <property type="match status" value="1"/>
</dbReference>
<dbReference type="PROSITE" id="PS00164">
    <property type="entry name" value="ENOLASE"/>
    <property type="match status" value="1"/>
</dbReference>
<accession>Q5E326</accession>
<feature type="chain" id="PRO_0000134004" description="Enolase">
    <location>
        <begin position="1"/>
        <end position="432"/>
    </location>
</feature>
<feature type="active site" description="Proton donor" evidence="1">
    <location>
        <position position="209"/>
    </location>
</feature>
<feature type="active site" description="Proton acceptor" evidence="1">
    <location>
        <position position="343"/>
    </location>
</feature>
<feature type="binding site" evidence="1">
    <location>
        <position position="167"/>
    </location>
    <ligand>
        <name>(2R)-2-phosphoglycerate</name>
        <dbReference type="ChEBI" id="CHEBI:58289"/>
    </ligand>
</feature>
<feature type="binding site" evidence="1">
    <location>
        <position position="246"/>
    </location>
    <ligand>
        <name>Mg(2+)</name>
        <dbReference type="ChEBI" id="CHEBI:18420"/>
    </ligand>
</feature>
<feature type="binding site" evidence="1">
    <location>
        <position position="291"/>
    </location>
    <ligand>
        <name>Mg(2+)</name>
        <dbReference type="ChEBI" id="CHEBI:18420"/>
    </ligand>
</feature>
<feature type="binding site" evidence="1">
    <location>
        <position position="318"/>
    </location>
    <ligand>
        <name>Mg(2+)</name>
        <dbReference type="ChEBI" id="CHEBI:18420"/>
    </ligand>
</feature>
<feature type="binding site" evidence="1">
    <location>
        <position position="343"/>
    </location>
    <ligand>
        <name>(2R)-2-phosphoglycerate</name>
        <dbReference type="ChEBI" id="CHEBI:58289"/>
    </ligand>
</feature>
<feature type="binding site" evidence="1">
    <location>
        <position position="372"/>
    </location>
    <ligand>
        <name>(2R)-2-phosphoglycerate</name>
        <dbReference type="ChEBI" id="CHEBI:58289"/>
    </ligand>
</feature>
<feature type="binding site" evidence="1">
    <location>
        <position position="373"/>
    </location>
    <ligand>
        <name>(2R)-2-phosphoglycerate</name>
        <dbReference type="ChEBI" id="CHEBI:58289"/>
    </ligand>
</feature>
<feature type="binding site" evidence="1">
    <location>
        <position position="394"/>
    </location>
    <ligand>
        <name>(2R)-2-phosphoglycerate</name>
        <dbReference type="ChEBI" id="CHEBI:58289"/>
    </ligand>
</feature>
<gene>
    <name evidence="1" type="primary">eno</name>
    <name type="ordered locus">VF_2075</name>
</gene>